<proteinExistence type="inferred from homology"/>
<feature type="chain" id="PRO_1000184148" description="Large ribosomal subunit protein uL30">
    <location>
        <begin position="1"/>
        <end position="59"/>
    </location>
</feature>
<gene>
    <name evidence="1" type="primary">rpmD</name>
    <name type="ordered locus">LMHCC_2920</name>
</gene>
<organism>
    <name type="scientific">Listeria monocytogenes serotype 4a (strain HCC23)</name>
    <dbReference type="NCBI Taxonomy" id="552536"/>
    <lineage>
        <taxon>Bacteria</taxon>
        <taxon>Bacillati</taxon>
        <taxon>Bacillota</taxon>
        <taxon>Bacilli</taxon>
        <taxon>Bacillales</taxon>
        <taxon>Listeriaceae</taxon>
        <taxon>Listeria</taxon>
    </lineage>
</organism>
<protein>
    <recommendedName>
        <fullName evidence="1">Large ribosomal subunit protein uL30</fullName>
    </recommendedName>
    <alternativeName>
        <fullName evidence="2">50S ribosomal protein L30</fullName>
    </alternativeName>
</protein>
<sequence length="59" mass="6493">MAKLEITLKRSLIGRPQPQRKTVQALGLGKTNSVVVKEDNPAIRGMITKVSHLVDVKEV</sequence>
<keyword id="KW-0687">Ribonucleoprotein</keyword>
<keyword id="KW-0689">Ribosomal protein</keyword>
<reference key="1">
    <citation type="journal article" date="2011" name="J. Bacteriol.">
        <title>Genome sequence of lineage III Listeria monocytogenes strain HCC23.</title>
        <authorList>
            <person name="Steele C.L."/>
            <person name="Donaldson J.R."/>
            <person name="Paul D."/>
            <person name="Banes M.M."/>
            <person name="Arick T."/>
            <person name="Bridges S.M."/>
            <person name="Lawrence M.L."/>
        </authorList>
    </citation>
    <scope>NUCLEOTIDE SEQUENCE [LARGE SCALE GENOMIC DNA]</scope>
    <source>
        <strain>HCC23</strain>
    </source>
</reference>
<evidence type="ECO:0000255" key="1">
    <source>
        <dbReference type="HAMAP-Rule" id="MF_01371"/>
    </source>
</evidence>
<evidence type="ECO:0000305" key="2"/>
<accession>B8DB26</accession>
<name>RL30_LISMH</name>
<comment type="subunit">
    <text evidence="1">Part of the 50S ribosomal subunit.</text>
</comment>
<comment type="similarity">
    <text evidence="1">Belongs to the universal ribosomal protein uL30 family.</text>
</comment>
<dbReference type="EMBL" id="CP001175">
    <property type="protein sequence ID" value="ACK41251.1"/>
    <property type="molecule type" value="Genomic_DNA"/>
</dbReference>
<dbReference type="RefSeq" id="WP_003720933.1">
    <property type="nucleotide sequence ID" value="NC_011660.1"/>
</dbReference>
<dbReference type="SMR" id="B8DB26"/>
<dbReference type="GeneID" id="93240495"/>
<dbReference type="KEGG" id="lmh:LMHCC_2920"/>
<dbReference type="HOGENOM" id="CLU_131047_2_1_9"/>
<dbReference type="GO" id="GO:0022625">
    <property type="term" value="C:cytosolic large ribosomal subunit"/>
    <property type="evidence" value="ECO:0007669"/>
    <property type="project" value="TreeGrafter"/>
</dbReference>
<dbReference type="GO" id="GO:0003735">
    <property type="term" value="F:structural constituent of ribosome"/>
    <property type="evidence" value="ECO:0007669"/>
    <property type="project" value="InterPro"/>
</dbReference>
<dbReference type="GO" id="GO:0006412">
    <property type="term" value="P:translation"/>
    <property type="evidence" value="ECO:0007669"/>
    <property type="project" value="UniProtKB-UniRule"/>
</dbReference>
<dbReference type="CDD" id="cd01658">
    <property type="entry name" value="Ribosomal_L30"/>
    <property type="match status" value="1"/>
</dbReference>
<dbReference type="FunFam" id="3.30.1390.20:FF:000001">
    <property type="entry name" value="50S ribosomal protein L30"/>
    <property type="match status" value="1"/>
</dbReference>
<dbReference type="Gene3D" id="3.30.1390.20">
    <property type="entry name" value="Ribosomal protein L30, ferredoxin-like fold domain"/>
    <property type="match status" value="1"/>
</dbReference>
<dbReference type="HAMAP" id="MF_01371_B">
    <property type="entry name" value="Ribosomal_uL30_B"/>
    <property type="match status" value="1"/>
</dbReference>
<dbReference type="InterPro" id="IPR036919">
    <property type="entry name" value="Ribo_uL30_ferredoxin-like_sf"/>
</dbReference>
<dbReference type="InterPro" id="IPR005996">
    <property type="entry name" value="Ribosomal_uL30_bac-type"/>
</dbReference>
<dbReference type="InterPro" id="IPR018038">
    <property type="entry name" value="Ribosomal_uL30_CS"/>
</dbReference>
<dbReference type="InterPro" id="IPR016082">
    <property type="entry name" value="Ribosomal_uL30_ferredoxin-like"/>
</dbReference>
<dbReference type="NCBIfam" id="TIGR01308">
    <property type="entry name" value="rpmD_bact"/>
    <property type="match status" value="1"/>
</dbReference>
<dbReference type="PANTHER" id="PTHR15892:SF2">
    <property type="entry name" value="LARGE RIBOSOMAL SUBUNIT PROTEIN UL30M"/>
    <property type="match status" value="1"/>
</dbReference>
<dbReference type="PANTHER" id="PTHR15892">
    <property type="entry name" value="MITOCHONDRIAL RIBOSOMAL PROTEIN L30"/>
    <property type="match status" value="1"/>
</dbReference>
<dbReference type="Pfam" id="PF00327">
    <property type="entry name" value="Ribosomal_L30"/>
    <property type="match status" value="1"/>
</dbReference>
<dbReference type="PIRSF" id="PIRSF002211">
    <property type="entry name" value="Ribosomal_L30_bac-type"/>
    <property type="match status" value="1"/>
</dbReference>
<dbReference type="SUPFAM" id="SSF55129">
    <property type="entry name" value="Ribosomal protein L30p/L7e"/>
    <property type="match status" value="1"/>
</dbReference>
<dbReference type="PROSITE" id="PS00634">
    <property type="entry name" value="RIBOSOMAL_L30"/>
    <property type="match status" value="1"/>
</dbReference>